<feature type="chain" id="PRO_0000086361" description="Serine/threonine-protein kinase-transforming protein mos">
    <location>
        <begin position="1"/>
        <end position="374"/>
    </location>
</feature>
<feature type="domain" description="Protein kinase" evidence="1">
    <location>
        <begin position="94"/>
        <end position="370"/>
    </location>
</feature>
<feature type="active site" description="Proton acceptor" evidence="1 2">
    <location>
        <position position="229"/>
    </location>
</feature>
<feature type="binding site" evidence="1">
    <location>
        <begin position="100"/>
        <end position="108"/>
    </location>
    <ligand>
        <name>ATP</name>
        <dbReference type="ChEBI" id="CHEBI:30616"/>
    </ligand>
</feature>
<feature type="binding site" evidence="1">
    <location>
        <position position="121"/>
    </location>
    <ligand>
        <name>ATP</name>
        <dbReference type="ChEBI" id="CHEBI:30616"/>
    </ligand>
</feature>
<organismHost>
    <name type="scientific">Mus musculus</name>
    <name type="common">Mouse</name>
    <dbReference type="NCBI Taxonomy" id="10090"/>
</organismHost>
<gene>
    <name type="primary">V-MOS</name>
</gene>
<evidence type="ECO:0000255" key="1">
    <source>
        <dbReference type="PROSITE-ProRule" id="PRU00159"/>
    </source>
</evidence>
<evidence type="ECO:0000255" key="2">
    <source>
        <dbReference type="PROSITE-ProRule" id="PRU10027"/>
    </source>
</evidence>
<evidence type="ECO:0000305" key="3"/>
<keyword id="KW-0067">ATP-binding</keyword>
<keyword id="KW-0418">Kinase</keyword>
<keyword id="KW-0547">Nucleotide-binding</keyword>
<keyword id="KW-0553">Oncogene</keyword>
<keyword id="KW-0723">Serine/threonine-protein kinase</keyword>
<keyword id="KW-0808">Transferase</keyword>
<proteinExistence type="inferred from homology"/>
<accession>P00538</accession>
<reference key="1">
    <citation type="journal article" date="1981" name="Cell">
        <title>Nucleotide sequence of the genome of a murine sarcoma virus.</title>
        <authorList>
            <person name="van Beveren C."/>
            <person name="van Straaten F."/>
            <person name="Galleshaw J.A."/>
            <person name="Verma I.M."/>
        </authorList>
    </citation>
    <scope>NUCLEOTIDE SEQUENCE [GENOMIC DNA]</scope>
</reference>
<reference key="2">
    <citation type="submission" date="1982-10" db="PIR data bank">
        <authorList>
            <person name="van Beveren C."/>
            <person name="van Straaten F."/>
            <person name="Galleshaw J.A."/>
            <person name="Verma I.M."/>
        </authorList>
    </citation>
    <scope>SEQUENCE REVISION TO 256</scope>
</reference>
<reference key="3">
    <citation type="journal article" date="1982" name="J. Virol.">
        <title>Demonstration of biological activity and nucleotide sequence of an in vitro synthesized clone of the Moloney murine sarcoma virus mos gene.</title>
        <authorList>
            <person name="Donoghue D.J."/>
        </authorList>
    </citation>
    <scope>NUCLEOTIDE SEQUENCE [GENOMIC DNA]</scope>
</reference>
<reference key="4">
    <citation type="journal article" date="1981" name="Science">
        <title>Complete nucleotide sequence and organization of the Moloney murine sarcoma virus genome.</title>
        <authorList>
            <person name="Reddy E.P."/>
            <person name="Smith M.J."/>
            <person name="Aaronson S.A."/>
        </authorList>
    </citation>
    <scope>NUCLEOTIDE SEQUENCE [GENOMIC DNA]</scope>
</reference>
<comment type="catalytic activity">
    <reaction>
        <text>L-seryl-[protein] + ATP = O-phospho-L-seryl-[protein] + ADP + H(+)</text>
        <dbReference type="Rhea" id="RHEA:17989"/>
        <dbReference type="Rhea" id="RHEA-COMP:9863"/>
        <dbReference type="Rhea" id="RHEA-COMP:11604"/>
        <dbReference type="ChEBI" id="CHEBI:15378"/>
        <dbReference type="ChEBI" id="CHEBI:29999"/>
        <dbReference type="ChEBI" id="CHEBI:30616"/>
        <dbReference type="ChEBI" id="CHEBI:83421"/>
        <dbReference type="ChEBI" id="CHEBI:456216"/>
        <dbReference type="EC" id="2.7.11.1"/>
    </reaction>
</comment>
<comment type="catalytic activity">
    <reaction>
        <text>L-threonyl-[protein] + ATP = O-phospho-L-threonyl-[protein] + ADP + H(+)</text>
        <dbReference type="Rhea" id="RHEA:46608"/>
        <dbReference type="Rhea" id="RHEA-COMP:11060"/>
        <dbReference type="Rhea" id="RHEA-COMP:11605"/>
        <dbReference type="ChEBI" id="CHEBI:15378"/>
        <dbReference type="ChEBI" id="CHEBI:30013"/>
        <dbReference type="ChEBI" id="CHEBI:30616"/>
        <dbReference type="ChEBI" id="CHEBI:61977"/>
        <dbReference type="ChEBI" id="CHEBI:456216"/>
        <dbReference type="EC" id="2.7.11.1"/>
    </reaction>
</comment>
<comment type="similarity">
    <text evidence="1">Belongs to the protein kinase superfamily. Ser/Thr protein kinase family.</text>
</comment>
<comment type="sequence caution" evidence="3">
    <conflict type="frameshift" ref="4"/>
</comment>
<name>MOS_MSVMO</name>
<protein>
    <recommendedName>
        <fullName>Serine/threonine-protein kinase-transforming protein mos</fullName>
        <ecNumber>2.7.11.1</ecNumber>
    </recommendedName>
</protein>
<sequence length="374" mass="40977">MAHSTPCSQTSLAVPNHFSLVSHVTVPSEGVMPSPLSLCRYLPRELSPSVDSRSCSIPLVAPRKAGKLFLGTTPPRAPGLPRRLAWFSIDWEQVCLMHRLGSGGFGSVYKATYHGVPVAIKQVNKCTEDLRASQRSFWAELNIAGLRHDNIVRVVAASTRTPEDSNSLGTIIMEFGGNVTLHQVIYDATRSPEPLSCRKQLSLGKCLKYSLDVVNGLLFLHSQSILHLDLKPANILISEQDVCKISDFGCSQKLQDLRGRQASPPHIGGTYTHQAPEILKGEIATPKADIYSFGITLWQMTTREVPYSGEPQYVQYAVVAYNLRPSLAGAVFTASLTGKALQNIIQSCWEARGLQRPSAELLQRDLKAFRGTLG</sequence>
<organism>
    <name type="scientific">Moloney murine sarcoma virus</name>
    <name type="common">MoMSV</name>
    <dbReference type="NCBI Taxonomy" id="11809"/>
    <lineage>
        <taxon>Viruses</taxon>
        <taxon>Riboviria</taxon>
        <taxon>Pararnavirae</taxon>
        <taxon>Artverviricota</taxon>
        <taxon>Revtraviricetes</taxon>
        <taxon>Ortervirales</taxon>
        <taxon>Retroviridae</taxon>
        <taxon>Orthoretrovirinae</taxon>
        <taxon>Gammaretrovirus</taxon>
    </lineage>
</organism>
<dbReference type="EC" id="2.7.11.1"/>
<dbReference type="EMBL" id="V01180">
    <property type="protein sequence ID" value="CAA24503.1"/>
    <property type="molecule type" value="Genomic_DNA"/>
</dbReference>
<dbReference type="PIR" id="A00647">
    <property type="entry name" value="TVMVM"/>
</dbReference>
<dbReference type="SMR" id="P00538"/>
<dbReference type="BRENDA" id="2.7.10.2">
    <property type="organism ID" value="3394"/>
</dbReference>
<dbReference type="GO" id="GO:0005524">
    <property type="term" value="F:ATP binding"/>
    <property type="evidence" value="ECO:0007669"/>
    <property type="project" value="UniProtKB-KW"/>
</dbReference>
<dbReference type="GO" id="GO:0106310">
    <property type="term" value="F:protein serine kinase activity"/>
    <property type="evidence" value="ECO:0007669"/>
    <property type="project" value="RHEA"/>
</dbReference>
<dbReference type="GO" id="GO:0004674">
    <property type="term" value="F:protein serine/threonine kinase activity"/>
    <property type="evidence" value="ECO:0007669"/>
    <property type="project" value="UniProtKB-KW"/>
</dbReference>
<dbReference type="CDD" id="cd13979">
    <property type="entry name" value="STKc_Mos"/>
    <property type="match status" value="1"/>
</dbReference>
<dbReference type="FunFam" id="1.10.510.10:FF:000490">
    <property type="entry name" value="Proto-oncogene serine/threonine-protein kinase mos"/>
    <property type="match status" value="1"/>
</dbReference>
<dbReference type="FunFam" id="3.30.200.20:FF:000316">
    <property type="entry name" value="Proto-oncogene serine/threonine-protein kinase mos"/>
    <property type="match status" value="1"/>
</dbReference>
<dbReference type="Gene3D" id="3.30.200.20">
    <property type="entry name" value="Phosphorylase Kinase, domain 1"/>
    <property type="match status" value="1"/>
</dbReference>
<dbReference type="Gene3D" id="1.10.510.10">
    <property type="entry name" value="Transferase(Phosphotransferase) domain 1"/>
    <property type="match status" value="1"/>
</dbReference>
<dbReference type="InterPro" id="IPR011009">
    <property type="entry name" value="Kinase-like_dom_sf"/>
</dbReference>
<dbReference type="InterPro" id="IPR000719">
    <property type="entry name" value="Prot_kinase_dom"/>
</dbReference>
<dbReference type="InterPro" id="IPR017441">
    <property type="entry name" value="Protein_kinase_ATP_BS"/>
</dbReference>
<dbReference type="InterPro" id="IPR008271">
    <property type="entry name" value="Ser/Thr_kinase_AS"/>
</dbReference>
<dbReference type="InterPro" id="IPR051681">
    <property type="entry name" value="Ser/Thr_Kinases-Pseudokinases"/>
</dbReference>
<dbReference type="PANTHER" id="PTHR44329">
    <property type="entry name" value="SERINE/THREONINE-PROTEIN KINASE TNNI3K-RELATED"/>
    <property type="match status" value="1"/>
</dbReference>
<dbReference type="PANTHER" id="PTHR44329:SF285">
    <property type="entry name" value="V-MOS MOLONEY MURINE SARCOMA VIRAL ONCO HOMOLOG"/>
    <property type="match status" value="1"/>
</dbReference>
<dbReference type="Pfam" id="PF00069">
    <property type="entry name" value="Pkinase"/>
    <property type="match status" value="1"/>
</dbReference>
<dbReference type="SMART" id="SM00220">
    <property type="entry name" value="S_TKc"/>
    <property type="match status" value="1"/>
</dbReference>
<dbReference type="SUPFAM" id="SSF56112">
    <property type="entry name" value="Protein kinase-like (PK-like)"/>
    <property type="match status" value="1"/>
</dbReference>
<dbReference type="PROSITE" id="PS00107">
    <property type="entry name" value="PROTEIN_KINASE_ATP"/>
    <property type="match status" value="1"/>
</dbReference>
<dbReference type="PROSITE" id="PS50011">
    <property type="entry name" value="PROTEIN_KINASE_DOM"/>
    <property type="match status" value="1"/>
</dbReference>
<dbReference type="PROSITE" id="PS00108">
    <property type="entry name" value="PROTEIN_KINASE_ST"/>
    <property type="match status" value="1"/>
</dbReference>